<organism>
    <name type="scientific">Aquifex aeolicus (strain VF5)</name>
    <dbReference type="NCBI Taxonomy" id="224324"/>
    <lineage>
        <taxon>Bacteria</taxon>
        <taxon>Pseudomonadati</taxon>
        <taxon>Aquificota</taxon>
        <taxon>Aquificia</taxon>
        <taxon>Aquificales</taxon>
        <taxon>Aquificaceae</taxon>
        <taxon>Aquifex</taxon>
    </lineage>
</organism>
<dbReference type="EC" id="2.1.1.182" evidence="1"/>
<dbReference type="EMBL" id="AE000657">
    <property type="protein sequence ID" value="AAC07637.1"/>
    <property type="molecule type" value="Genomic_DNA"/>
</dbReference>
<dbReference type="PIR" id="F70456">
    <property type="entry name" value="F70456"/>
</dbReference>
<dbReference type="RefSeq" id="NP_214246.1">
    <property type="nucleotide sequence ID" value="NC_000918.1"/>
</dbReference>
<dbReference type="RefSeq" id="WP_010881183.1">
    <property type="nucleotide sequence ID" value="NC_000918.1"/>
</dbReference>
<dbReference type="PDB" id="3FTC">
    <property type="method" value="X-ray"/>
    <property type="resolution" value="1.68 A"/>
    <property type="chains" value="A=1-248"/>
</dbReference>
<dbReference type="PDB" id="3FTD">
    <property type="method" value="X-ray"/>
    <property type="resolution" value="1.44 A"/>
    <property type="chains" value="A=1-248"/>
</dbReference>
<dbReference type="PDB" id="3FTE">
    <property type="method" value="X-ray"/>
    <property type="resolution" value="3.00 A"/>
    <property type="chains" value="A=1-248"/>
</dbReference>
<dbReference type="PDB" id="3FTF">
    <property type="method" value="X-ray"/>
    <property type="resolution" value="2.80 A"/>
    <property type="chains" value="A=1-248"/>
</dbReference>
<dbReference type="PDB" id="3R9X">
    <property type="method" value="X-ray"/>
    <property type="resolution" value="2.80 A"/>
    <property type="chains" value="B=1-248"/>
</dbReference>
<dbReference type="PDBsum" id="3FTC"/>
<dbReference type="PDBsum" id="3FTD"/>
<dbReference type="PDBsum" id="3FTE"/>
<dbReference type="PDBsum" id="3FTF"/>
<dbReference type="PDBsum" id="3R9X"/>
<dbReference type="SMR" id="O67680"/>
<dbReference type="FunCoup" id="O67680">
    <property type="interactions" value="419"/>
</dbReference>
<dbReference type="STRING" id="224324.aq_1816"/>
<dbReference type="EnsemblBacteria" id="AAC07637">
    <property type="protein sequence ID" value="AAC07637"/>
    <property type="gene ID" value="aq_1816"/>
</dbReference>
<dbReference type="KEGG" id="aae:aq_1816"/>
<dbReference type="PATRIC" id="fig|224324.8.peg.1403"/>
<dbReference type="eggNOG" id="COG0030">
    <property type="taxonomic scope" value="Bacteria"/>
</dbReference>
<dbReference type="HOGENOM" id="CLU_041220_0_2_0"/>
<dbReference type="InParanoid" id="O67680"/>
<dbReference type="OrthoDB" id="9814755at2"/>
<dbReference type="BRENDA" id="2.1.1.182">
    <property type="organism ID" value="396"/>
</dbReference>
<dbReference type="EvolutionaryTrace" id="O67680"/>
<dbReference type="Proteomes" id="UP000000798">
    <property type="component" value="Chromosome"/>
</dbReference>
<dbReference type="GO" id="GO:0005829">
    <property type="term" value="C:cytosol"/>
    <property type="evidence" value="ECO:0000318"/>
    <property type="project" value="GO_Central"/>
</dbReference>
<dbReference type="GO" id="GO:0052908">
    <property type="term" value="F:16S rRNA (adenine(1518)-N(6)/adenine(1519)-N(6))-dimethyltransferase activity"/>
    <property type="evidence" value="ECO:0007669"/>
    <property type="project" value="UniProtKB-EC"/>
</dbReference>
<dbReference type="GO" id="GO:0003723">
    <property type="term" value="F:RNA binding"/>
    <property type="evidence" value="ECO:0007669"/>
    <property type="project" value="UniProtKB-KW"/>
</dbReference>
<dbReference type="GO" id="GO:0000179">
    <property type="term" value="F:rRNA (adenine-N6,N6-)-dimethyltransferase activity"/>
    <property type="evidence" value="ECO:0000318"/>
    <property type="project" value="GO_Central"/>
</dbReference>
<dbReference type="GO" id="GO:0031167">
    <property type="term" value="P:rRNA methylation"/>
    <property type="evidence" value="ECO:0000318"/>
    <property type="project" value="GO_Central"/>
</dbReference>
<dbReference type="CDD" id="cd02440">
    <property type="entry name" value="AdoMet_MTases"/>
    <property type="match status" value="1"/>
</dbReference>
<dbReference type="FunFam" id="3.40.50.150:FF:000157">
    <property type="entry name" value="Ribosomal RNA small subunit methyltransferase A"/>
    <property type="match status" value="1"/>
</dbReference>
<dbReference type="Gene3D" id="1.10.8.100">
    <property type="entry name" value="Ribosomal RNA adenine dimethylase-like, domain 2"/>
    <property type="match status" value="1"/>
</dbReference>
<dbReference type="Gene3D" id="3.40.50.150">
    <property type="entry name" value="Vaccinia Virus protein VP39"/>
    <property type="match status" value="1"/>
</dbReference>
<dbReference type="HAMAP" id="MF_00607">
    <property type="entry name" value="16SrRNA_methyltr_A"/>
    <property type="match status" value="1"/>
</dbReference>
<dbReference type="InterPro" id="IPR001737">
    <property type="entry name" value="KsgA/Erm"/>
</dbReference>
<dbReference type="InterPro" id="IPR023165">
    <property type="entry name" value="rRNA_Ade_diMease-like_C"/>
</dbReference>
<dbReference type="InterPro" id="IPR020596">
    <property type="entry name" value="rRNA_Ade_Mease_Trfase_CS"/>
</dbReference>
<dbReference type="InterPro" id="IPR020598">
    <property type="entry name" value="rRNA_Ade_methylase_Trfase_N"/>
</dbReference>
<dbReference type="InterPro" id="IPR011530">
    <property type="entry name" value="rRNA_adenine_dimethylase"/>
</dbReference>
<dbReference type="InterPro" id="IPR029063">
    <property type="entry name" value="SAM-dependent_MTases_sf"/>
</dbReference>
<dbReference type="NCBIfam" id="TIGR00755">
    <property type="entry name" value="ksgA"/>
    <property type="match status" value="1"/>
</dbReference>
<dbReference type="PANTHER" id="PTHR11727">
    <property type="entry name" value="DIMETHYLADENOSINE TRANSFERASE"/>
    <property type="match status" value="1"/>
</dbReference>
<dbReference type="PANTHER" id="PTHR11727:SF7">
    <property type="entry name" value="DIMETHYLADENOSINE TRANSFERASE-RELATED"/>
    <property type="match status" value="1"/>
</dbReference>
<dbReference type="Pfam" id="PF00398">
    <property type="entry name" value="RrnaAD"/>
    <property type="match status" value="1"/>
</dbReference>
<dbReference type="SMART" id="SM00650">
    <property type="entry name" value="rADc"/>
    <property type="match status" value="1"/>
</dbReference>
<dbReference type="SUPFAM" id="SSF53335">
    <property type="entry name" value="S-adenosyl-L-methionine-dependent methyltransferases"/>
    <property type="match status" value="1"/>
</dbReference>
<dbReference type="PROSITE" id="PS01131">
    <property type="entry name" value="RRNA_A_DIMETH"/>
    <property type="match status" value="1"/>
</dbReference>
<dbReference type="PROSITE" id="PS51689">
    <property type="entry name" value="SAM_RNA_A_N6_MT"/>
    <property type="match status" value="1"/>
</dbReference>
<sequence length="248" mass="28355">MVRLKKSFGQHLLVSEGVLKKIAEELNIEEGNTVVEVGGGTGNLTKVLLQHPLKKLYVIELDREMVENLKSIGDERLEVINEDASKFPFCSLGKELKVVGNLPYNVASLIIENTVYNKDCVPLAVFMVQKEVAEKLQGKKDTGWLSVFVRTFYDVNYVMTVPPRFFVPPPKVQSAVIKLVKNEKFPVKDLKNYKKFLTKIFQNRRKVLRKKIPEELLKEAGINPDARVEQLSLEDFFKLYRLIEDSGE</sequence>
<keyword id="KW-0002">3D-structure</keyword>
<keyword id="KW-0963">Cytoplasm</keyword>
<keyword id="KW-0489">Methyltransferase</keyword>
<keyword id="KW-1185">Reference proteome</keyword>
<keyword id="KW-0694">RNA-binding</keyword>
<keyword id="KW-0698">rRNA processing</keyword>
<keyword id="KW-0949">S-adenosyl-L-methionine</keyword>
<keyword id="KW-0808">Transferase</keyword>
<proteinExistence type="evidence at protein level"/>
<gene>
    <name evidence="1" type="primary">rsmA</name>
    <name evidence="1" type="synonym">ksgA</name>
    <name type="ordered locus">aq_1816</name>
</gene>
<feature type="chain" id="PRO_0000101474" description="Ribosomal RNA small subunit methyltransferase A">
    <location>
        <begin position="1"/>
        <end position="248"/>
    </location>
</feature>
<feature type="binding site" evidence="1">
    <location>
        <position position="11"/>
    </location>
    <ligand>
        <name>S-adenosyl-L-methionine</name>
        <dbReference type="ChEBI" id="CHEBI:59789"/>
    </ligand>
</feature>
<feature type="binding site">
    <location>
        <position position="13"/>
    </location>
    <ligand>
        <name>S-adenosyl-L-methionine</name>
        <dbReference type="ChEBI" id="CHEBI:59789"/>
    </ligand>
</feature>
<feature type="binding site" evidence="1">
    <location>
        <position position="38"/>
    </location>
    <ligand>
        <name>S-adenosyl-L-methionine</name>
        <dbReference type="ChEBI" id="CHEBI:59789"/>
    </ligand>
</feature>
<feature type="binding site">
    <location>
        <position position="60"/>
    </location>
    <ligand>
        <name>S-adenosyl-L-methionine</name>
        <dbReference type="ChEBI" id="CHEBI:59789"/>
    </ligand>
</feature>
<feature type="binding site">
    <location>
        <position position="83"/>
    </location>
    <ligand>
        <name>S-adenosyl-L-methionine</name>
        <dbReference type="ChEBI" id="CHEBI:59789"/>
    </ligand>
</feature>
<feature type="binding site">
    <location>
        <position position="101"/>
    </location>
    <ligand>
        <name>S-adenosyl-L-methionine</name>
        <dbReference type="ChEBI" id="CHEBI:59789"/>
    </ligand>
</feature>
<feature type="site" description="Interaction with RNA">
    <location>
        <position position="105"/>
    </location>
</feature>
<feature type="site" description="Interaction with RNA">
    <location>
        <position position="198"/>
    </location>
</feature>
<feature type="site" description="Interaction with RNA">
    <location>
        <position position="202"/>
    </location>
</feature>
<feature type="site" description="Interaction with RNA">
    <location>
        <position position="204"/>
    </location>
</feature>
<feature type="turn" evidence="4">
    <location>
        <begin position="6"/>
        <end position="9"/>
    </location>
</feature>
<feature type="helix" evidence="3">
    <location>
        <begin position="16"/>
        <end position="25"/>
    </location>
</feature>
<feature type="strand" evidence="3">
    <location>
        <begin position="33"/>
        <end position="39"/>
    </location>
</feature>
<feature type="helix" evidence="3">
    <location>
        <begin position="41"/>
        <end position="48"/>
    </location>
</feature>
<feature type="strand" evidence="3">
    <location>
        <begin position="54"/>
        <end position="59"/>
    </location>
</feature>
<feature type="helix" evidence="3">
    <location>
        <begin position="63"/>
        <end position="69"/>
    </location>
</feature>
<feature type="strand" evidence="3">
    <location>
        <begin position="77"/>
        <end position="80"/>
    </location>
</feature>
<feature type="turn" evidence="3">
    <location>
        <begin position="84"/>
        <end position="86"/>
    </location>
</feature>
<feature type="helix" evidence="3">
    <location>
        <begin position="89"/>
        <end position="91"/>
    </location>
</feature>
<feature type="strand" evidence="3">
    <location>
        <begin position="94"/>
        <end position="101"/>
    </location>
</feature>
<feature type="turn" evidence="3">
    <location>
        <begin position="104"/>
        <end position="106"/>
    </location>
</feature>
<feature type="helix" evidence="3">
    <location>
        <begin position="107"/>
        <end position="116"/>
    </location>
</feature>
<feature type="helix" evidence="3">
    <location>
        <begin position="117"/>
        <end position="120"/>
    </location>
</feature>
<feature type="strand" evidence="3">
    <location>
        <begin position="122"/>
        <end position="129"/>
    </location>
</feature>
<feature type="helix" evidence="3">
    <location>
        <begin position="130"/>
        <end position="137"/>
    </location>
</feature>
<feature type="strand" evidence="2">
    <location>
        <begin position="139"/>
        <end position="141"/>
    </location>
</feature>
<feature type="helix" evidence="3">
    <location>
        <begin position="144"/>
        <end position="152"/>
    </location>
</feature>
<feature type="strand" evidence="3">
    <location>
        <begin position="153"/>
        <end position="161"/>
    </location>
</feature>
<feature type="helix" evidence="3">
    <location>
        <begin position="163"/>
        <end position="165"/>
    </location>
</feature>
<feature type="strand" evidence="3">
    <location>
        <begin position="166"/>
        <end position="168"/>
    </location>
</feature>
<feature type="strand" evidence="3">
    <location>
        <begin position="174"/>
        <end position="181"/>
    </location>
</feature>
<feature type="helix" evidence="3">
    <location>
        <begin position="190"/>
        <end position="201"/>
    </location>
</feature>
<feature type="turn" evidence="4">
    <location>
        <begin position="202"/>
        <end position="205"/>
    </location>
</feature>
<feature type="helix" evidence="3">
    <location>
        <begin position="208"/>
        <end position="210"/>
    </location>
</feature>
<feature type="helix" evidence="3">
    <location>
        <begin position="214"/>
        <end position="219"/>
    </location>
</feature>
<feature type="helix" evidence="3">
    <location>
        <begin position="228"/>
        <end position="230"/>
    </location>
</feature>
<feature type="helix" evidence="3">
    <location>
        <begin position="233"/>
        <end position="244"/>
    </location>
</feature>
<name>RSMA_AQUAE</name>
<accession>O67680</accession>
<protein>
    <recommendedName>
        <fullName evidence="1">Ribosomal RNA small subunit methyltransferase A</fullName>
        <ecNumber evidence="1">2.1.1.182</ecNumber>
    </recommendedName>
    <alternativeName>
        <fullName evidence="1">16S rRNA (adenine(1518)-N(6)/adenine(1519)-N(6))-dimethyltransferase</fullName>
    </alternativeName>
    <alternativeName>
        <fullName evidence="1">16S rRNA dimethyladenosine transferase</fullName>
    </alternativeName>
    <alternativeName>
        <fullName evidence="1">16S rRNA dimethylase</fullName>
    </alternativeName>
    <alternativeName>
        <fullName evidence="1">S-adenosylmethionine-6-N', N'-adenosyl(rRNA) dimethyltransferase</fullName>
    </alternativeName>
</protein>
<evidence type="ECO:0000255" key="1">
    <source>
        <dbReference type="HAMAP-Rule" id="MF_00607"/>
    </source>
</evidence>
<evidence type="ECO:0007829" key="2">
    <source>
        <dbReference type="PDB" id="3FTC"/>
    </source>
</evidence>
<evidence type="ECO:0007829" key="3">
    <source>
        <dbReference type="PDB" id="3FTD"/>
    </source>
</evidence>
<evidence type="ECO:0007829" key="4">
    <source>
        <dbReference type="PDB" id="3FTF"/>
    </source>
</evidence>
<reference key="1">
    <citation type="journal article" date="1998" name="Nature">
        <title>The complete genome of the hyperthermophilic bacterium Aquifex aeolicus.</title>
        <authorList>
            <person name="Deckert G."/>
            <person name="Warren P.V."/>
            <person name="Gaasterland T."/>
            <person name="Young W.G."/>
            <person name="Lenox A.L."/>
            <person name="Graham D.E."/>
            <person name="Overbeek R."/>
            <person name="Snead M.A."/>
            <person name="Keller M."/>
            <person name="Aujay M."/>
            <person name="Huber R."/>
            <person name="Feldman R.A."/>
            <person name="Short J.M."/>
            <person name="Olsen G.J."/>
            <person name="Swanson R.V."/>
        </authorList>
    </citation>
    <scope>NUCLEOTIDE SEQUENCE [LARGE SCALE GENOMIC DNA]</scope>
    <source>
        <strain>VF5</strain>
    </source>
</reference>
<reference key="2">
    <citation type="journal article" date="2009" name="Structure">
        <title>Structural basis for binding of RNA and cofactor by a KsgA methyltransferase.</title>
        <authorList>
            <person name="Tu C."/>
            <person name="Tropea J.E."/>
            <person name="Austin B.P."/>
            <person name="Court D.L."/>
            <person name="Waugh D.S."/>
            <person name="Ji X."/>
        </authorList>
    </citation>
    <scope>X-RAY CRYSTALLOGRAPHY (1.44 ANGSTROMS) IN COMPLEXES WITH RNA AND S-ADENOSYL-L-HOMOCYSTEINE</scope>
    <scope>RNA-BINDING</scope>
</reference>
<comment type="function">
    <text evidence="1">Specifically dimethylates two adjacent adenosines (A1518 and A1519) in the loop of a conserved hairpin near the 3'-end of 16S rRNA in the 30S particle. May play a critical role in biogenesis of 30S subunits.</text>
</comment>
<comment type="catalytic activity">
    <reaction evidence="1">
        <text>adenosine(1518)/adenosine(1519) in 16S rRNA + 4 S-adenosyl-L-methionine = N(6)-dimethyladenosine(1518)/N(6)-dimethyladenosine(1519) in 16S rRNA + 4 S-adenosyl-L-homocysteine + 4 H(+)</text>
        <dbReference type="Rhea" id="RHEA:19609"/>
        <dbReference type="Rhea" id="RHEA-COMP:10232"/>
        <dbReference type="Rhea" id="RHEA-COMP:10233"/>
        <dbReference type="ChEBI" id="CHEBI:15378"/>
        <dbReference type="ChEBI" id="CHEBI:57856"/>
        <dbReference type="ChEBI" id="CHEBI:59789"/>
        <dbReference type="ChEBI" id="CHEBI:74411"/>
        <dbReference type="ChEBI" id="CHEBI:74493"/>
        <dbReference type="EC" id="2.1.1.182"/>
    </reaction>
</comment>
<comment type="subcellular location">
    <subcellularLocation>
        <location evidence="1">Cytoplasm</location>
    </subcellularLocation>
</comment>
<comment type="similarity">
    <text evidence="1">Belongs to the class I-like SAM-binding methyltransferase superfamily. rRNA adenine N(6)-methyltransferase family. RsmA subfamily.</text>
</comment>